<keyword id="KW-0010">Activator</keyword>
<keyword id="KW-0235">DNA replication</keyword>
<keyword id="KW-0238">DNA-binding</keyword>
<keyword id="KW-0244">Early protein</keyword>
<keyword id="KW-1048">Host nucleus</keyword>
<keyword id="KW-0597">Phosphoprotein</keyword>
<keyword id="KW-0678">Repressor</keyword>
<keyword id="KW-0804">Transcription</keyword>
<keyword id="KW-0805">Transcription regulation</keyword>
<name>VE2_HPV03</name>
<gene>
    <name evidence="1" type="primary">E2</name>
</gene>
<sequence>METLANRLDVCQDKILELYEKDSDKLEDQIMHWQLMRLEQALLYKARECGLTHIGHQVVPPLSVTKAKARSAIEVHVSLQQLQHSAHAQDPWTLRDTSREMWDTVPKKCWKKRGLTVEVRYDGDENKAMCYVQWREIIVQNYTDDNWVKVAGLVSHEGLYYMHEGQKTFYVKFKDDARVYGDTGTWDVHVGGKVIHHDSFDPVSSTREIPAPGPLYACTTQAPTQAQVGASEGPEQKRQRLETVYGEQQQQQQQQQQQQQHTQTPAPQTTERARQPLDTDRTRDRDTTCPHPIGHRSDPDCVPVIHLRGDPNCLKCFRYRLNKGKNKLYSRTSSTWRWSCESENQCAYVTIWYTSYGQREAFLSTVKVPPGIQVILGHMSMFT</sequence>
<proteinExistence type="inferred from homology"/>
<reference key="1">
    <citation type="journal article" date="1994" name="Curr. Top. Microbiol. Immunol.">
        <title>Primer-directed sequencing of human papillomavirus types.</title>
        <authorList>
            <person name="Delius H."/>
            <person name="Hofmann B."/>
        </authorList>
    </citation>
    <scope>NUCLEOTIDE SEQUENCE [GENOMIC DNA]</scope>
</reference>
<organism>
    <name type="scientific">Human papillomavirus 3</name>
    <dbReference type="NCBI Taxonomy" id="10614"/>
    <lineage>
        <taxon>Viruses</taxon>
        <taxon>Monodnaviria</taxon>
        <taxon>Shotokuvirae</taxon>
        <taxon>Cossaviricota</taxon>
        <taxon>Papovaviricetes</taxon>
        <taxon>Zurhausenvirales</taxon>
        <taxon>Papillomaviridae</taxon>
        <taxon>Firstpapillomavirinae</taxon>
        <taxon>Alphapapillomavirus</taxon>
        <taxon>Alphapapillomavirus 2</taxon>
    </lineage>
</organism>
<feature type="chain" id="PRO_0000133180" description="Regulatory protein E2">
    <location>
        <begin position="1"/>
        <end position="383"/>
    </location>
</feature>
<feature type="region of interest" description="Transactivation domain" evidence="1">
    <location>
        <begin position="1"/>
        <end position="206"/>
    </location>
</feature>
<feature type="region of interest" description="Disordered" evidence="2">
    <location>
        <begin position="198"/>
        <end position="296"/>
    </location>
</feature>
<feature type="region of interest" description="DNA-binding domain" evidence="1">
    <location>
        <begin position="301"/>
        <end position="383"/>
    </location>
</feature>
<feature type="compositionally biased region" description="Polar residues" evidence="2">
    <location>
        <begin position="218"/>
        <end position="228"/>
    </location>
</feature>
<feature type="compositionally biased region" description="Low complexity" evidence="2">
    <location>
        <begin position="248"/>
        <end position="260"/>
    </location>
</feature>
<feature type="compositionally biased region" description="Polar residues" evidence="2">
    <location>
        <begin position="261"/>
        <end position="270"/>
    </location>
</feature>
<feature type="compositionally biased region" description="Basic and acidic residues" evidence="2">
    <location>
        <begin position="271"/>
        <end position="288"/>
    </location>
</feature>
<accession>P36778</accession>
<organismHost>
    <name type="scientific">Homo sapiens</name>
    <name type="common">Human</name>
    <dbReference type="NCBI Taxonomy" id="9606"/>
</organismHost>
<dbReference type="EMBL" id="X74462">
    <property type="protein sequence ID" value="CAA52472.1"/>
    <property type="molecule type" value="Genomic_DNA"/>
</dbReference>
<dbReference type="PIR" id="S36552">
    <property type="entry name" value="S36552"/>
</dbReference>
<dbReference type="SMR" id="P36778"/>
<dbReference type="IntAct" id="P36778">
    <property type="interactions" value="63"/>
</dbReference>
<dbReference type="MINT" id="P36778"/>
<dbReference type="Proteomes" id="UP000007706">
    <property type="component" value="Genome"/>
</dbReference>
<dbReference type="GO" id="GO:0042025">
    <property type="term" value="C:host cell nucleus"/>
    <property type="evidence" value="ECO:0007669"/>
    <property type="project" value="UniProtKB-SubCell"/>
</dbReference>
<dbReference type="GO" id="GO:0003677">
    <property type="term" value="F:DNA binding"/>
    <property type="evidence" value="ECO:0007669"/>
    <property type="project" value="UniProtKB-UniRule"/>
</dbReference>
<dbReference type="GO" id="GO:0003700">
    <property type="term" value="F:DNA-binding transcription factor activity"/>
    <property type="evidence" value="ECO:0007669"/>
    <property type="project" value="UniProtKB-UniRule"/>
</dbReference>
<dbReference type="GO" id="GO:0000166">
    <property type="term" value="F:nucleotide binding"/>
    <property type="evidence" value="ECO:0007669"/>
    <property type="project" value="UniProtKB-UniRule"/>
</dbReference>
<dbReference type="GO" id="GO:0006260">
    <property type="term" value="P:DNA replication"/>
    <property type="evidence" value="ECO:0007669"/>
    <property type="project" value="UniProtKB-KW"/>
</dbReference>
<dbReference type="GO" id="GO:0006351">
    <property type="term" value="P:DNA-templated transcription"/>
    <property type="evidence" value="ECO:0007669"/>
    <property type="project" value="UniProtKB-UniRule"/>
</dbReference>
<dbReference type="GO" id="GO:0006275">
    <property type="term" value="P:regulation of DNA replication"/>
    <property type="evidence" value="ECO:0007669"/>
    <property type="project" value="UniProtKB-UniRule"/>
</dbReference>
<dbReference type="GO" id="GO:0039693">
    <property type="term" value="P:viral DNA genome replication"/>
    <property type="evidence" value="ECO:0007669"/>
    <property type="project" value="UniProtKB-UniRule"/>
</dbReference>
<dbReference type="Gene3D" id="3.30.70.330">
    <property type="match status" value="1"/>
</dbReference>
<dbReference type="Gene3D" id="1.10.287.30">
    <property type="entry name" value="E2 (early) protein, N terminal domain, subdomain 1"/>
    <property type="match status" value="1"/>
</dbReference>
<dbReference type="Gene3D" id="2.170.200.10">
    <property type="entry name" value="Papillomavirus E2 early protein domain"/>
    <property type="match status" value="1"/>
</dbReference>
<dbReference type="HAMAP" id="MF_04001">
    <property type="entry name" value="PPV_E2"/>
    <property type="match status" value="1"/>
</dbReference>
<dbReference type="InterPro" id="IPR035975">
    <property type="entry name" value="E2/EBNA1_C_sf"/>
</dbReference>
<dbReference type="InterPro" id="IPR012677">
    <property type="entry name" value="Nucleotide-bd_a/b_plait_sf"/>
</dbReference>
<dbReference type="InterPro" id="IPR000427">
    <property type="entry name" value="Papillomavirus_E2_C"/>
</dbReference>
<dbReference type="InterPro" id="IPR001866">
    <property type="entry name" value="PPV_E2_N"/>
</dbReference>
<dbReference type="InterPro" id="IPR033668">
    <property type="entry name" value="Reg_prot_E2"/>
</dbReference>
<dbReference type="InterPro" id="IPR036050">
    <property type="entry name" value="Regulatory_protein_E2_N"/>
</dbReference>
<dbReference type="InterPro" id="IPR042503">
    <property type="entry name" value="Regulatory_protein_E2_N_1"/>
</dbReference>
<dbReference type="InterPro" id="IPR042504">
    <property type="entry name" value="Regulatory_protein_E2_N_2"/>
</dbReference>
<dbReference type="Pfam" id="PF00511">
    <property type="entry name" value="PPV_E2_C"/>
    <property type="match status" value="1"/>
</dbReference>
<dbReference type="Pfam" id="PF00508">
    <property type="entry name" value="PPV_E2_N"/>
    <property type="match status" value="1"/>
</dbReference>
<dbReference type="SUPFAM" id="SSF51332">
    <property type="entry name" value="E2 regulatory, transactivation domain"/>
    <property type="match status" value="1"/>
</dbReference>
<dbReference type="SUPFAM" id="SSF54957">
    <property type="entry name" value="Viral DNA-binding domain"/>
    <property type="match status" value="1"/>
</dbReference>
<protein>
    <recommendedName>
        <fullName evidence="1">Regulatory protein E2</fullName>
    </recommendedName>
</protein>
<evidence type="ECO:0000255" key="1">
    <source>
        <dbReference type="HAMAP-Rule" id="MF_04001"/>
    </source>
</evidence>
<evidence type="ECO:0000256" key="2">
    <source>
        <dbReference type="SAM" id="MobiDB-lite"/>
    </source>
</evidence>
<comment type="function">
    <text evidence="1">Plays a role in the initiation of viral DNA replication. A dimer of E2 interacts with a dimer of E1 in order to improve specificity of E1 DNA binding activity. Once the complex recognizes and binds DNA at specific sites, the E2 dimer is removed from DNA. E2 also regulates viral transcription through binding to the E2RE response element (5'-ACCNNNNNNGGT-3') present in multiple copies in the regulatory regions of the viral genome. Activates or represses transcription depending on E2RE's position with regards to proximal promoter elements including the TATA-box. Repression occurs by sterically hindering the assembly of the transcription initiation complex.</text>
</comment>
<comment type="subunit">
    <text evidence="1">Binds DNA as homodimer. Interacts with protein E1; this interaction greatly increases E1 DNA-binding activity. Interacts with protein L1; this interaction enhances E2-dependent replication and transcription activation. Interacts with protein L2; this interaction inhibits E2 transcriptional activity but not DNA replication function E2. Interacts with protein E7; this interaction inhibits E7 oncogenic activity. Interacts with host TAF1; this interaction modulates E2-dependent transcriptional regulation. Interacts with host BRD4; this interaction mediates E2 transcriptional activation function. Additionally, the interaction with host BRD4 on mitotic chromosomes mediates tethering of the viral genome. Interacts with host TOPBP1; this interaction is required for optimal viral DNA replication.</text>
</comment>
<comment type="subcellular location">
    <subcellularLocation>
        <location evidence="1">Host nucleus</location>
    </subcellularLocation>
</comment>
<comment type="PTM">
    <text evidence="1">Phosphorylated.</text>
</comment>
<comment type="similarity">
    <text evidence="1">Belongs to the papillomaviridae E2 protein family.</text>
</comment>